<accession>Q2RMV0</accession>
<protein>
    <recommendedName>
        <fullName evidence="1">Argininosuccinate synthase</fullName>
        <ecNumber evidence="1">6.3.4.5</ecNumber>
    </recommendedName>
    <alternativeName>
        <fullName evidence="1">Citrulline--aspartate ligase</fullName>
    </alternativeName>
</protein>
<feature type="chain" id="PRO_0000263965" description="Argininosuccinate synthase">
    <location>
        <begin position="1"/>
        <end position="404"/>
    </location>
</feature>
<feature type="binding site" evidence="1">
    <location>
        <begin position="12"/>
        <end position="20"/>
    </location>
    <ligand>
        <name>ATP</name>
        <dbReference type="ChEBI" id="CHEBI:30616"/>
    </ligand>
</feature>
<feature type="binding site" evidence="1">
    <location>
        <position position="39"/>
    </location>
    <ligand>
        <name>ATP</name>
        <dbReference type="ChEBI" id="CHEBI:30616"/>
    </ligand>
</feature>
<feature type="binding site" evidence="1">
    <location>
        <position position="90"/>
    </location>
    <ligand>
        <name>L-citrulline</name>
        <dbReference type="ChEBI" id="CHEBI:57743"/>
    </ligand>
</feature>
<feature type="binding site" evidence="1">
    <location>
        <position position="95"/>
    </location>
    <ligand>
        <name>L-citrulline</name>
        <dbReference type="ChEBI" id="CHEBI:57743"/>
    </ligand>
</feature>
<feature type="binding site" evidence="1">
    <location>
        <position position="120"/>
    </location>
    <ligand>
        <name>ATP</name>
        <dbReference type="ChEBI" id="CHEBI:30616"/>
    </ligand>
</feature>
<feature type="binding site" evidence="1">
    <location>
        <position position="122"/>
    </location>
    <ligand>
        <name>L-aspartate</name>
        <dbReference type="ChEBI" id="CHEBI:29991"/>
    </ligand>
</feature>
<feature type="binding site" evidence="1">
    <location>
        <position position="126"/>
    </location>
    <ligand>
        <name>L-aspartate</name>
        <dbReference type="ChEBI" id="CHEBI:29991"/>
    </ligand>
</feature>
<feature type="binding site" evidence="1">
    <location>
        <position position="126"/>
    </location>
    <ligand>
        <name>L-citrulline</name>
        <dbReference type="ChEBI" id="CHEBI:57743"/>
    </ligand>
</feature>
<feature type="binding site" evidence="1">
    <location>
        <position position="127"/>
    </location>
    <ligand>
        <name>L-aspartate</name>
        <dbReference type="ChEBI" id="CHEBI:29991"/>
    </ligand>
</feature>
<feature type="binding site" evidence="1">
    <location>
        <position position="130"/>
    </location>
    <ligand>
        <name>L-citrulline</name>
        <dbReference type="ChEBI" id="CHEBI:57743"/>
    </ligand>
</feature>
<feature type="binding site" evidence="1">
    <location>
        <position position="181"/>
    </location>
    <ligand>
        <name>L-citrulline</name>
        <dbReference type="ChEBI" id="CHEBI:57743"/>
    </ligand>
</feature>
<feature type="binding site" evidence="1">
    <location>
        <position position="190"/>
    </location>
    <ligand>
        <name>L-citrulline</name>
        <dbReference type="ChEBI" id="CHEBI:57743"/>
    </ligand>
</feature>
<feature type="binding site" evidence="1">
    <location>
        <position position="266"/>
    </location>
    <ligand>
        <name>L-citrulline</name>
        <dbReference type="ChEBI" id="CHEBI:57743"/>
    </ligand>
</feature>
<feature type="binding site" evidence="1">
    <location>
        <position position="278"/>
    </location>
    <ligand>
        <name>L-citrulline</name>
        <dbReference type="ChEBI" id="CHEBI:57743"/>
    </ligand>
</feature>
<sequence>MKKGDVKKVVLAYSGGLDTSIILRWLQDEYDCEVVTFTADIGQGEELEPARQKAEMMGIKEIYIEDLREEFVRDYVFPMFRANTLYEGVYLLGTSIARPLIGKRLVEIAEATGADAVSHGATGKGNDQVRFELTAYALKPDIKIIAPWRTWDLHSRTKLIEYAMRHQIPVPKDKHGEAPYSMDANLLHISYEGKALENPWTEPSEDMFRLTVSPEAAPDKAQYIEVDFERGDAVAIDGEKLTPAALLAKLNEIGGRHGVGRLDLVENRYVGMKSRGVYETPGGTILQVAHRAVESLTLDREVMHLRDELMPRYAKLIYNGFWFAPERLMLQAAIDQTQQTVTGTARLKLYKGNVSVVGRKAAKSLYRMDYVTFEEDTVYDQHDAEGFIKLNALRLRLGKMARDS</sequence>
<evidence type="ECO:0000255" key="1">
    <source>
        <dbReference type="HAMAP-Rule" id="MF_00005"/>
    </source>
</evidence>
<evidence type="ECO:0000305" key="2"/>
<name>ASSY_RHORT</name>
<organism>
    <name type="scientific">Rhodospirillum rubrum (strain ATCC 11170 / ATH 1.1.1 / DSM 467 / LMG 4362 / NCIMB 8255 / S1)</name>
    <dbReference type="NCBI Taxonomy" id="269796"/>
    <lineage>
        <taxon>Bacteria</taxon>
        <taxon>Pseudomonadati</taxon>
        <taxon>Pseudomonadota</taxon>
        <taxon>Alphaproteobacteria</taxon>
        <taxon>Rhodospirillales</taxon>
        <taxon>Rhodospirillaceae</taxon>
        <taxon>Rhodospirillum</taxon>
    </lineage>
</organism>
<proteinExistence type="inferred from homology"/>
<dbReference type="EC" id="6.3.4.5" evidence="1"/>
<dbReference type="EMBL" id="CP000230">
    <property type="protein sequence ID" value="ABC24545.1"/>
    <property type="status" value="ALT_INIT"/>
    <property type="molecule type" value="Genomic_DNA"/>
</dbReference>
<dbReference type="RefSeq" id="WP_014626653.1">
    <property type="nucleotide sequence ID" value="NC_007643.1"/>
</dbReference>
<dbReference type="RefSeq" id="YP_428832.1">
    <property type="nucleotide sequence ID" value="NC_007643.1"/>
</dbReference>
<dbReference type="SMR" id="Q2RMV0"/>
<dbReference type="STRING" id="269796.Rru_A3751"/>
<dbReference type="EnsemblBacteria" id="ABC24545">
    <property type="protein sequence ID" value="ABC24545"/>
    <property type="gene ID" value="Rru_A3751"/>
</dbReference>
<dbReference type="KEGG" id="rru:Rru_A3751"/>
<dbReference type="PATRIC" id="fig|269796.9.peg.3875"/>
<dbReference type="eggNOG" id="COG0137">
    <property type="taxonomic scope" value="Bacteria"/>
</dbReference>
<dbReference type="HOGENOM" id="CLU_032784_4_2_5"/>
<dbReference type="PhylomeDB" id="Q2RMV0"/>
<dbReference type="UniPathway" id="UPA00068">
    <property type="reaction ID" value="UER00113"/>
</dbReference>
<dbReference type="Proteomes" id="UP000001929">
    <property type="component" value="Chromosome"/>
</dbReference>
<dbReference type="GO" id="GO:0005737">
    <property type="term" value="C:cytoplasm"/>
    <property type="evidence" value="ECO:0007669"/>
    <property type="project" value="UniProtKB-SubCell"/>
</dbReference>
<dbReference type="GO" id="GO:0004055">
    <property type="term" value="F:argininosuccinate synthase activity"/>
    <property type="evidence" value="ECO:0007669"/>
    <property type="project" value="UniProtKB-UniRule"/>
</dbReference>
<dbReference type="GO" id="GO:0005524">
    <property type="term" value="F:ATP binding"/>
    <property type="evidence" value="ECO:0007669"/>
    <property type="project" value="UniProtKB-UniRule"/>
</dbReference>
<dbReference type="GO" id="GO:0000053">
    <property type="term" value="P:argininosuccinate metabolic process"/>
    <property type="evidence" value="ECO:0007669"/>
    <property type="project" value="TreeGrafter"/>
</dbReference>
<dbReference type="GO" id="GO:0006526">
    <property type="term" value="P:L-arginine biosynthetic process"/>
    <property type="evidence" value="ECO:0007669"/>
    <property type="project" value="UniProtKB-UniRule"/>
</dbReference>
<dbReference type="GO" id="GO:0000050">
    <property type="term" value="P:urea cycle"/>
    <property type="evidence" value="ECO:0007669"/>
    <property type="project" value="TreeGrafter"/>
</dbReference>
<dbReference type="CDD" id="cd01999">
    <property type="entry name" value="ASS"/>
    <property type="match status" value="1"/>
</dbReference>
<dbReference type="FunFam" id="3.40.50.620:FF:000019">
    <property type="entry name" value="Argininosuccinate synthase"/>
    <property type="match status" value="1"/>
</dbReference>
<dbReference type="FunFam" id="3.90.1260.10:FF:000007">
    <property type="entry name" value="Argininosuccinate synthase"/>
    <property type="match status" value="1"/>
</dbReference>
<dbReference type="Gene3D" id="3.90.1260.10">
    <property type="entry name" value="Argininosuccinate synthetase, chain A, domain 2"/>
    <property type="match status" value="1"/>
</dbReference>
<dbReference type="Gene3D" id="3.40.50.620">
    <property type="entry name" value="HUPs"/>
    <property type="match status" value="1"/>
</dbReference>
<dbReference type="Gene3D" id="1.20.5.470">
    <property type="entry name" value="Single helix bin"/>
    <property type="match status" value="1"/>
</dbReference>
<dbReference type="HAMAP" id="MF_00005">
    <property type="entry name" value="Arg_succ_synth_type1"/>
    <property type="match status" value="1"/>
</dbReference>
<dbReference type="InterPro" id="IPR048268">
    <property type="entry name" value="Arginosuc_syn_C"/>
</dbReference>
<dbReference type="InterPro" id="IPR048267">
    <property type="entry name" value="Arginosuc_syn_N"/>
</dbReference>
<dbReference type="InterPro" id="IPR001518">
    <property type="entry name" value="Arginosuc_synth"/>
</dbReference>
<dbReference type="InterPro" id="IPR018223">
    <property type="entry name" value="Arginosuc_synth_CS"/>
</dbReference>
<dbReference type="InterPro" id="IPR023434">
    <property type="entry name" value="Arginosuc_synth_type_1_subfam"/>
</dbReference>
<dbReference type="InterPro" id="IPR024074">
    <property type="entry name" value="AS_cat/multimer_dom_body"/>
</dbReference>
<dbReference type="InterPro" id="IPR014729">
    <property type="entry name" value="Rossmann-like_a/b/a_fold"/>
</dbReference>
<dbReference type="NCBIfam" id="TIGR00032">
    <property type="entry name" value="argG"/>
    <property type="match status" value="1"/>
</dbReference>
<dbReference type="NCBIfam" id="NF001770">
    <property type="entry name" value="PRK00509.1"/>
    <property type="match status" value="1"/>
</dbReference>
<dbReference type="PANTHER" id="PTHR11587">
    <property type="entry name" value="ARGININOSUCCINATE SYNTHASE"/>
    <property type="match status" value="1"/>
</dbReference>
<dbReference type="PANTHER" id="PTHR11587:SF2">
    <property type="entry name" value="ARGININOSUCCINATE SYNTHASE"/>
    <property type="match status" value="1"/>
</dbReference>
<dbReference type="Pfam" id="PF20979">
    <property type="entry name" value="Arginosuc_syn_C"/>
    <property type="match status" value="1"/>
</dbReference>
<dbReference type="Pfam" id="PF00764">
    <property type="entry name" value="Arginosuc_synth"/>
    <property type="match status" value="1"/>
</dbReference>
<dbReference type="SUPFAM" id="SSF52402">
    <property type="entry name" value="Adenine nucleotide alpha hydrolases-like"/>
    <property type="match status" value="1"/>
</dbReference>
<dbReference type="SUPFAM" id="SSF69864">
    <property type="entry name" value="Argininosuccinate synthetase, C-terminal domain"/>
    <property type="match status" value="1"/>
</dbReference>
<dbReference type="PROSITE" id="PS00564">
    <property type="entry name" value="ARGININOSUCCIN_SYN_1"/>
    <property type="match status" value="1"/>
</dbReference>
<dbReference type="PROSITE" id="PS00565">
    <property type="entry name" value="ARGININOSUCCIN_SYN_2"/>
    <property type="match status" value="1"/>
</dbReference>
<comment type="catalytic activity">
    <reaction evidence="1">
        <text>L-citrulline + L-aspartate + ATP = 2-(N(omega)-L-arginino)succinate + AMP + diphosphate + H(+)</text>
        <dbReference type="Rhea" id="RHEA:10932"/>
        <dbReference type="ChEBI" id="CHEBI:15378"/>
        <dbReference type="ChEBI" id="CHEBI:29991"/>
        <dbReference type="ChEBI" id="CHEBI:30616"/>
        <dbReference type="ChEBI" id="CHEBI:33019"/>
        <dbReference type="ChEBI" id="CHEBI:57472"/>
        <dbReference type="ChEBI" id="CHEBI:57743"/>
        <dbReference type="ChEBI" id="CHEBI:456215"/>
        <dbReference type="EC" id="6.3.4.5"/>
    </reaction>
</comment>
<comment type="pathway">
    <text evidence="1">Amino-acid biosynthesis; L-arginine biosynthesis; L-arginine from L-ornithine and carbamoyl phosphate: step 2/3.</text>
</comment>
<comment type="subunit">
    <text evidence="1">Homotetramer.</text>
</comment>
<comment type="subcellular location">
    <subcellularLocation>
        <location evidence="1">Cytoplasm</location>
    </subcellularLocation>
</comment>
<comment type="similarity">
    <text evidence="1">Belongs to the argininosuccinate synthase family. Type 1 subfamily.</text>
</comment>
<comment type="sequence caution" evidence="2">
    <conflict type="erroneous initiation">
        <sequence resource="EMBL-CDS" id="ABC24545"/>
    </conflict>
</comment>
<reference key="1">
    <citation type="journal article" date="2011" name="Stand. Genomic Sci.">
        <title>Complete genome sequence of Rhodospirillum rubrum type strain (S1).</title>
        <authorList>
            <person name="Munk A.C."/>
            <person name="Copeland A."/>
            <person name="Lucas S."/>
            <person name="Lapidus A."/>
            <person name="Del Rio T.G."/>
            <person name="Barry K."/>
            <person name="Detter J.C."/>
            <person name="Hammon N."/>
            <person name="Israni S."/>
            <person name="Pitluck S."/>
            <person name="Brettin T."/>
            <person name="Bruce D."/>
            <person name="Han C."/>
            <person name="Tapia R."/>
            <person name="Gilna P."/>
            <person name="Schmutz J."/>
            <person name="Larimer F."/>
            <person name="Land M."/>
            <person name="Kyrpides N.C."/>
            <person name="Mavromatis K."/>
            <person name="Richardson P."/>
            <person name="Rohde M."/>
            <person name="Goeker M."/>
            <person name="Klenk H.P."/>
            <person name="Zhang Y."/>
            <person name="Roberts G.P."/>
            <person name="Reslewic S."/>
            <person name="Schwartz D.C."/>
        </authorList>
    </citation>
    <scope>NUCLEOTIDE SEQUENCE [LARGE SCALE GENOMIC DNA]</scope>
    <source>
        <strain>ATCC 11170 / ATH 1.1.1 / DSM 467 / LMG 4362 / NCIMB 8255 / S1</strain>
    </source>
</reference>
<keyword id="KW-0028">Amino-acid biosynthesis</keyword>
<keyword id="KW-0055">Arginine biosynthesis</keyword>
<keyword id="KW-0067">ATP-binding</keyword>
<keyword id="KW-0963">Cytoplasm</keyword>
<keyword id="KW-0436">Ligase</keyword>
<keyword id="KW-0547">Nucleotide-binding</keyword>
<keyword id="KW-1185">Reference proteome</keyword>
<gene>
    <name evidence="1" type="primary">argG</name>
    <name type="ordered locus">Rru_A3751</name>
</gene>